<proteinExistence type="inferred from homology"/>
<name>ATPL_SALG2</name>
<protein>
    <recommendedName>
        <fullName evidence="1">ATP synthase subunit c</fullName>
    </recommendedName>
    <alternativeName>
        <fullName evidence="1">ATP synthase F(0) sector subunit c</fullName>
    </alternativeName>
    <alternativeName>
        <fullName evidence="1">F-type ATPase subunit c</fullName>
        <shortName evidence="1">F-ATPase subunit c</shortName>
    </alternativeName>
    <alternativeName>
        <fullName evidence="1">Lipid-binding protein</fullName>
    </alternativeName>
</protein>
<reference key="1">
    <citation type="journal article" date="2008" name="Genome Res.">
        <title>Comparative genome analysis of Salmonella enteritidis PT4 and Salmonella gallinarum 287/91 provides insights into evolutionary and host adaptation pathways.</title>
        <authorList>
            <person name="Thomson N.R."/>
            <person name="Clayton D.J."/>
            <person name="Windhorst D."/>
            <person name="Vernikos G."/>
            <person name="Davidson S."/>
            <person name="Churcher C."/>
            <person name="Quail M.A."/>
            <person name="Stevens M."/>
            <person name="Jones M.A."/>
            <person name="Watson M."/>
            <person name="Barron A."/>
            <person name="Layton A."/>
            <person name="Pickard D."/>
            <person name="Kingsley R.A."/>
            <person name="Bignell A."/>
            <person name="Clark L."/>
            <person name="Harris B."/>
            <person name="Ormond D."/>
            <person name="Abdellah Z."/>
            <person name="Brooks K."/>
            <person name="Cherevach I."/>
            <person name="Chillingworth T."/>
            <person name="Woodward J."/>
            <person name="Norberczak H."/>
            <person name="Lord A."/>
            <person name="Arrowsmith C."/>
            <person name="Jagels K."/>
            <person name="Moule S."/>
            <person name="Mungall K."/>
            <person name="Saunders M."/>
            <person name="Whitehead S."/>
            <person name="Chabalgoity J.A."/>
            <person name="Maskell D."/>
            <person name="Humphreys T."/>
            <person name="Roberts M."/>
            <person name="Barrow P.A."/>
            <person name="Dougan G."/>
            <person name="Parkhill J."/>
        </authorList>
    </citation>
    <scope>NUCLEOTIDE SEQUENCE [LARGE SCALE GENOMIC DNA]</scope>
    <source>
        <strain>287/91 / NCTC 13346</strain>
    </source>
</reference>
<evidence type="ECO:0000255" key="1">
    <source>
        <dbReference type="HAMAP-Rule" id="MF_01396"/>
    </source>
</evidence>
<keyword id="KW-0066">ATP synthesis</keyword>
<keyword id="KW-0997">Cell inner membrane</keyword>
<keyword id="KW-1003">Cell membrane</keyword>
<keyword id="KW-0138">CF(0)</keyword>
<keyword id="KW-0375">Hydrogen ion transport</keyword>
<keyword id="KW-0406">Ion transport</keyword>
<keyword id="KW-0446">Lipid-binding</keyword>
<keyword id="KW-0472">Membrane</keyword>
<keyword id="KW-0812">Transmembrane</keyword>
<keyword id="KW-1133">Transmembrane helix</keyword>
<keyword id="KW-0813">Transport</keyword>
<accession>B5RFV8</accession>
<comment type="function">
    <text evidence="1">F(1)F(0) ATP synthase produces ATP from ADP in the presence of a proton or sodium gradient. F-type ATPases consist of two structural domains, F(1) containing the extramembraneous catalytic core and F(0) containing the membrane proton channel, linked together by a central stalk and a peripheral stalk. During catalysis, ATP synthesis in the catalytic domain of F(1) is coupled via a rotary mechanism of the central stalk subunits to proton translocation.</text>
</comment>
<comment type="function">
    <text evidence="1">Key component of the F(0) channel; it plays a direct role in translocation across the membrane. A homomeric c-ring of between 10-14 subunits forms the central stalk rotor element with the F(1) delta and epsilon subunits.</text>
</comment>
<comment type="subunit">
    <text evidence="1">F-type ATPases have 2 components, F(1) - the catalytic core - and F(0) - the membrane proton channel. F(1) has five subunits: alpha(3), beta(3), gamma(1), delta(1), epsilon(1). F(0) has three main subunits: a(1), b(2) and c(10-14). The alpha and beta chains form an alternating ring which encloses part of the gamma chain. F(1) is attached to F(0) by a central stalk formed by the gamma and epsilon chains, while a peripheral stalk is formed by the delta and b chains.</text>
</comment>
<comment type="subcellular location">
    <subcellularLocation>
        <location evidence="1">Cell inner membrane</location>
        <topology evidence="1">Multi-pass membrane protein</topology>
    </subcellularLocation>
</comment>
<comment type="similarity">
    <text evidence="1">Belongs to the ATPase C chain family.</text>
</comment>
<feature type="chain" id="PRO_1000184458" description="ATP synthase subunit c">
    <location>
        <begin position="1"/>
        <end position="79"/>
    </location>
</feature>
<feature type="transmembrane region" description="Helical" evidence="1">
    <location>
        <begin position="11"/>
        <end position="31"/>
    </location>
</feature>
<feature type="transmembrane region" description="Helical" evidence="1">
    <location>
        <begin position="53"/>
        <end position="73"/>
    </location>
</feature>
<feature type="site" description="Reversibly protonated during proton transport" evidence="1">
    <location>
        <position position="61"/>
    </location>
</feature>
<dbReference type="EMBL" id="AM933173">
    <property type="protein sequence ID" value="CAR39352.1"/>
    <property type="molecule type" value="Genomic_DNA"/>
</dbReference>
<dbReference type="RefSeq" id="WP_000429386.1">
    <property type="nucleotide sequence ID" value="NC_011274.1"/>
</dbReference>
<dbReference type="SMR" id="B5RFV8"/>
<dbReference type="GeneID" id="98390858"/>
<dbReference type="KEGG" id="seg:SG3563"/>
<dbReference type="HOGENOM" id="CLU_148047_1_0_6"/>
<dbReference type="Proteomes" id="UP000008321">
    <property type="component" value="Chromosome"/>
</dbReference>
<dbReference type="GO" id="GO:0005886">
    <property type="term" value="C:plasma membrane"/>
    <property type="evidence" value="ECO:0007669"/>
    <property type="project" value="UniProtKB-SubCell"/>
</dbReference>
<dbReference type="GO" id="GO:0045259">
    <property type="term" value="C:proton-transporting ATP synthase complex"/>
    <property type="evidence" value="ECO:0007669"/>
    <property type="project" value="UniProtKB-KW"/>
</dbReference>
<dbReference type="GO" id="GO:0033177">
    <property type="term" value="C:proton-transporting two-sector ATPase complex, proton-transporting domain"/>
    <property type="evidence" value="ECO:0007669"/>
    <property type="project" value="InterPro"/>
</dbReference>
<dbReference type="GO" id="GO:0008289">
    <property type="term" value="F:lipid binding"/>
    <property type="evidence" value="ECO:0007669"/>
    <property type="project" value="UniProtKB-KW"/>
</dbReference>
<dbReference type="GO" id="GO:0046933">
    <property type="term" value="F:proton-transporting ATP synthase activity, rotational mechanism"/>
    <property type="evidence" value="ECO:0007669"/>
    <property type="project" value="UniProtKB-UniRule"/>
</dbReference>
<dbReference type="CDD" id="cd18185">
    <property type="entry name" value="ATP-synt_Fo_c_ATPE"/>
    <property type="match status" value="1"/>
</dbReference>
<dbReference type="FunFam" id="1.20.20.10:FF:000002">
    <property type="entry name" value="ATP synthase subunit c"/>
    <property type="match status" value="1"/>
</dbReference>
<dbReference type="Gene3D" id="1.20.20.10">
    <property type="entry name" value="F1F0 ATP synthase subunit C"/>
    <property type="match status" value="1"/>
</dbReference>
<dbReference type="HAMAP" id="MF_01396">
    <property type="entry name" value="ATP_synth_c_bact"/>
    <property type="match status" value="1"/>
</dbReference>
<dbReference type="InterPro" id="IPR005953">
    <property type="entry name" value="ATP_synth_csu_bac/chlpt"/>
</dbReference>
<dbReference type="InterPro" id="IPR000454">
    <property type="entry name" value="ATP_synth_F0_csu"/>
</dbReference>
<dbReference type="InterPro" id="IPR020537">
    <property type="entry name" value="ATP_synth_F0_csu_DDCD_BS"/>
</dbReference>
<dbReference type="InterPro" id="IPR038662">
    <property type="entry name" value="ATP_synth_F0_csu_sf"/>
</dbReference>
<dbReference type="InterPro" id="IPR002379">
    <property type="entry name" value="ATPase_proteolipid_c-like_dom"/>
</dbReference>
<dbReference type="InterPro" id="IPR035921">
    <property type="entry name" value="F/V-ATP_Csub_sf"/>
</dbReference>
<dbReference type="NCBIfam" id="TIGR01260">
    <property type="entry name" value="ATP_synt_c"/>
    <property type="match status" value="1"/>
</dbReference>
<dbReference type="NCBIfam" id="NF005363">
    <property type="entry name" value="PRK06876.1"/>
    <property type="match status" value="1"/>
</dbReference>
<dbReference type="Pfam" id="PF00137">
    <property type="entry name" value="ATP-synt_C"/>
    <property type="match status" value="1"/>
</dbReference>
<dbReference type="PRINTS" id="PR00124">
    <property type="entry name" value="ATPASEC"/>
</dbReference>
<dbReference type="SUPFAM" id="SSF81333">
    <property type="entry name" value="F1F0 ATP synthase subunit C"/>
    <property type="match status" value="1"/>
</dbReference>
<dbReference type="PROSITE" id="PS00605">
    <property type="entry name" value="ATPASE_C"/>
    <property type="match status" value="1"/>
</dbReference>
<organism>
    <name type="scientific">Salmonella gallinarum (strain 287/91 / NCTC 13346)</name>
    <dbReference type="NCBI Taxonomy" id="550538"/>
    <lineage>
        <taxon>Bacteria</taxon>
        <taxon>Pseudomonadati</taxon>
        <taxon>Pseudomonadota</taxon>
        <taxon>Gammaproteobacteria</taxon>
        <taxon>Enterobacterales</taxon>
        <taxon>Enterobacteriaceae</taxon>
        <taxon>Salmonella</taxon>
    </lineage>
</organism>
<gene>
    <name evidence="1" type="primary">atpE</name>
    <name type="ordered locus">SG3563</name>
</gene>
<sequence length="79" mass="8256">MENLNMDLLYMAAAVMMGLAAIGAAIGIGILGGKFLEGAARQPDLIPLLRTQFFIVMGLVDAIPMIAVGLGLYVMFAVA</sequence>